<reference key="1">
    <citation type="journal article" date="2002" name="Nat. Neurosci.">
        <title>The olfactory receptor gene superfamily of the mouse.</title>
        <authorList>
            <person name="Zhang X."/>
            <person name="Firestein S."/>
        </authorList>
    </citation>
    <scope>NUCLEOTIDE SEQUENCE [GENOMIC DNA]</scope>
</reference>
<reference key="2">
    <citation type="journal article" date="2002" name="Hum. Mol. Genet.">
        <title>Different evolutionary processes shaped the mouse and human olfactory receptor gene families.</title>
        <authorList>
            <person name="Young J.M."/>
            <person name="Friedman C."/>
            <person name="Williams E.M."/>
            <person name="Ross J.A."/>
            <person name="Tonnes-Priddy L."/>
            <person name="Trask B.J."/>
        </authorList>
    </citation>
    <scope>NUCLEOTIDE SEQUENCE [GENOMIC DNA]</scope>
</reference>
<reference key="3">
    <citation type="journal article" date="2002" name="Hum. Mol. Genet.">
        <authorList>
            <person name="Young J.M."/>
            <person name="Friedman C."/>
            <person name="Williams E.M."/>
            <person name="Ross J.A."/>
            <person name="Tonnes-Priddy L."/>
            <person name="Trask B.J."/>
        </authorList>
    </citation>
    <scope>ERRATUM OF PUBMED:11875048</scope>
</reference>
<comment type="function">
    <text>Odorant receptor.</text>
</comment>
<comment type="subcellular location">
    <subcellularLocation>
        <location evidence="3">Cell membrane</location>
        <topology evidence="1">Multi-pass membrane protein</topology>
    </subcellularLocation>
</comment>
<comment type="similarity">
    <text evidence="2">Belongs to the G-protein coupled receptor 1 family.</text>
</comment>
<evidence type="ECO:0000255" key="1"/>
<evidence type="ECO:0000255" key="2">
    <source>
        <dbReference type="PROSITE-ProRule" id="PRU00521"/>
    </source>
</evidence>
<evidence type="ECO:0000305" key="3"/>
<evidence type="ECO:0000312" key="4">
    <source>
        <dbReference type="MGI" id="MGI:3031278"/>
    </source>
</evidence>
<gene>
    <name evidence="4" type="primary">Or5b21</name>
    <name evidence="4" type="synonym">Mor202-4</name>
    <name evidence="4" type="synonym">Olfr1444</name>
</gene>
<protein>
    <recommendedName>
        <fullName evidence="3">Olfactory receptor 5B21</fullName>
    </recommendedName>
    <alternativeName>
        <fullName>Olfactory receptor 1444</fullName>
    </alternativeName>
    <alternativeName>
        <fullName>Olfactory receptor 202-4</fullName>
    </alternativeName>
</protein>
<proteinExistence type="inferred from homology"/>
<sequence>MTSMENITEVTEFILLGLTDDPNLQVPLLLIFLFIYLVTLIGNGGMMVIIFSDSHLHTPMYFFLSNLSFVDLGYSSAVAPKMVAALQSGNKVISYNGCAAQFFFFVGFATVECYLLASMAYDRHAAVCRPLHYTTTMTTGVCTILTIGSYTCGFLNASIHAADTFKLSFCGSNKINHFFCDIPPLLALACSSTHISKLVVFFVVGFNVFFTLLVIIISYFFIYIAIQNMKSSEGRKKAFSTCASHLTAVSIFYGTIIFMYLQPSSGQSMDTDKIASVFYTVVIPMLNPLIYSLRNREVKSALWKILNRFYPASFSVSRK</sequence>
<feature type="chain" id="PRO_0000150869" description="Olfactory receptor 5B21">
    <location>
        <begin position="1"/>
        <end position="319"/>
    </location>
</feature>
<feature type="topological domain" description="Extracellular" evidence="1">
    <location>
        <begin position="1"/>
        <end position="26"/>
    </location>
</feature>
<feature type="transmembrane region" description="Helical; Name=1" evidence="1">
    <location>
        <begin position="27"/>
        <end position="47"/>
    </location>
</feature>
<feature type="topological domain" description="Cytoplasmic" evidence="1">
    <location>
        <begin position="48"/>
        <end position="55"/>
    </location>
</feature>
<feature type="transmembrane region" description="Helical; Name=2" evidence="1">
    <location>
        <begin position="56"/>
        <end position="76"/>
    </location>
</feature>
<feature type="topological domain" description="Extracellular" evidence="1">
    <location>
        <begin position="77"/>
        <end position="100"/>
    </location>
</feature>
<feature type="transmembrane region" description="Helical; Name=3" evidence="1">
    <location>
        <begin position="101"/>
        <end position="121"/>
    </location>
</feature>
<feature type="topological domain" description="Cytoplasmic" evidence="1">
    <location>
        <begin position="122"/>
        <end position="134"/>
    </location>
</feature>
<feature type="transmembrane region" description="Helical; Name=4" evidence="1">
    <location>
        <begin position="135"/>
        <end position="155"/>
    </location>
</feature>
<feature type="topological domain" description="Extracellular" evidence="1">
    <location>
        <begin position="156"/>
        <end position="197"/>
    </location>
</feature>
<feature type="transmembrane region" description="Helical; Name=5" evidence="1">
    <location>
        <begin position="198"/>
        <end position="218"/>
    </location>
</feature>
<feature type="topological domain" description="Cytoplasmic" evidence="1">
    <location>
        <begin position="219"/>
        <end position="238"/>
    </location>
</feature>
<feature type="transmembrane region" description="Helical; Name=6" evidence="1">
    <location>
        <begin position="239"/>
        <end position="259"/>
    </location>
</feature>
<feature type="topological domain" description="Extracellular" evidence="1">
    <location>
        <begin position="260"/>
        <end position="272"/>
    </location>
</feature>
<feature type="transmembrane region" description="Helical; Name=7" evidence="1">
    <location>
        <begin position="273"/>
        <end position="293"/>
    </location>
</feature>
<feature type="topological domain" description="Cytoplasmic" evidence="1">
    <location>
        <begin position="294"/>
        <end position="319"/>
    </location>
</feature>
<feature type="glycosylation site" description="N-linked (GlcNAc...) asparagine" evidence="1">
    <location>
        <position position="6"/>
    </location>
</feature>
<feature type="disulfide bond" evidence="2">
    <location>
        <begin position="98"/>
        <end position="190"/>
    </location>
</feature>
<organism>
    <name type="scientific">Mus musculus</name>
    <name type="common">Mouse</name>
    <dbReference type="NCBI Taxonomy" id="10090"/>
    <lineage>
        <taxon>Eukaryota</taxon>
        <taxon>Metazoa</taxon>
        <taxon>Chordata</taxon>
        <taxon>Craniata</taxon>
        <taxon>Vertebrata</taxon>
        <taxon>Euteleostomi</taxon>
        <taxon>Mammalia</taxon>
        <taxon>Eutheria</taxon>
        <taxon>Euarchontoglires</taxon>
        <taxon>Glires</taxon>
        <taxon>Rodentia</taxon>
        <taxon>Myomorpha</taxon>
        <taxon>Muroidea</taxon>
        <taxon>Muridae</taxon>
        <taxon>Murinae</taxon>
        <taxon>Mus</taxon>
        <taxon>Mus</taxon>
    </lineage>
</organism>
<accession>Q8VFX2</accession>
<dbReference type="EMBL" id="AY073393">
    <property type="protein sequence ID" value="AAL61056.1"/>
    <property type="molecule type" value="Genomic_DNA"/>
</dbReference>
<dbReference type="EMBL" id="AY318663">
    <property type="protein sequence ID" value="AAP71814.1"/>
    <property type="molecule type" value="Genomic_DNA"/>
</dbReference>
<dbReference type="CCDS" id="CCDS29640.1"/>
<dbReference type="RefSeq" id="NP_666913.1">
    <property type="nucleotide sequence ID" value="NM_146702.1"/>
</dbReference>
<dbReference type="SMR" id="Q8VFX2"/>
<dbReference type="FunCoup" id="Q8VFX2">
    <property type="interactions" value="1192"/>
</dbReference>
<dbReference type="STRING" id="10090.ENSMUSP00000150212"/>
<dbReference type="GlyCosmos" id="Q8VFX2">
    <property type="glycosylation" value="1 site, No reported glycans"/>
</dbReference>
<dbReference type="GlyGen" id="Q8VFX2">
    <property type="glycosylation" value="1 site"/>
</dbReference>
<dbReference type="PhosphoSitePlus" id="Q8VFX2"/>
<dbReference type="PaxDb" id="10090-ENSMUSP00000062460"/>
<dbReference type="Antibodypedia" id="27658">
    <property type="antibodies" value="7 antibodies from 7 providers"/>
</dbReference>
<dbReference type="DNASU" id="258697"/>
<dbReference type="Ensembl" id="ENSMUST00000059675.4">
    <property type="protein sequence ID" value="ENSMUSP00000062460.3"/>
    <property type="gene ID" value="ENSMUSG00000046272.5"/>
</dbReference>
<dbReference type="Ensembl" id="ENSMUST00000213606.2">
    <property type="protein sequence ID" value="ENSMUSP00000150212.2"/>
    <property type="gene ID" value="ENSMUSG00000046272.5"/>
</dbReference>
<dbReference type="GeneID" id="258697"/>
<dbReference type="KEGG" id="mmu:258697"/>
<dbReference type="UCSC" id="uc008gur.1">
    <property type="organism name" value="mouse"/>
</dbReference>
<dbReference type="AGR" id="MGI:3031278"/>
<dbReference type="CTD" id="219968"/>
<dbReference type="MGI" id="MGI:3031278">
    <property type="gene designation" value="Or5b21"/>
</dbReference>
<dbReference type="VEuPathDB" id="HostDB:ENSMUSG00000046272"/>
<dbReference type="eggNOG" id="ENOG502SKXC">
    <property type="taxonomic scope" value="Eukaryota"/>
</dbReference>
<dbReference type="GeneTree" id="ENSGT01120000271832"/>
<dbReference type="HOGENOM" id="CLU_012526_1_0_1"/>
<dbReference type="InParanoid" id="Q8VFX2"/>
<dbReference type="OMA" id="FCVVGFN"/>
<dbReference type="OrthoDB" id="5964498at2759"/>
<dbReference type="PhylomeDB" id="Q8VFX2"/>
<dbReference type="TreeFam" id="TF352753"/>
<dbReference type="BioGRID-ORCS" id="258697">
    <property type="hits" value="1 hit in 71 CRISPR screens"/>
</dbReference>
<dbReference type="PRO" id="PR:Q8VFX2"/>
<dbReference type="Proteomes" id="UP000000589">
    <property type="component" value="Chromosome 19"/>
</dbReference>
<dbReference type="RNAct" id="Q8VFX2">
    <property type="molecule type" value="protein"/>
</dbReference>
<dbReference type="Bgee" id="ENSMUSG00000046272">
    <property type="expression patterns" value="Expressed in spermatocyte"/>
</dbReference>
<dbReference type="ExpressionAtlas" id="Q8VFX2">
    <property type="expression patterns" value="baseline and differential"/>
</dbReference>
<dbReference type="GO" id="GO:0005789">
    <property type="term" value="C:endoplasmic reticulum membrane"/>
    <property type="evidence" value="ECO:0000304"/>
    <property type="project" value="Reactome"/>
</dbReference>
<dbReference type="GO" id="GO:0016020">
    <property type="term" value="C:membrane"/>
    <property type="evidence" value="ECO:0000247"/>
    <property type="project" value="MGI"/>
</dbReference>
<dbReference type="GO" id="GO:0005886">
    <property type="term" value="C:plasma membrane"/>
    <property type="evidence" value="ECO:0000304"/>
    <property type="project" value="Reactome"/>
</dbReference>
<dbReference type="GO" id="GO:0004930">
    <property type="term" value="F:G protein-coupled receptor activity"/>
    <property type="evidence" value="ECO:0007669"/>
    <property type="project" value="UniProtKB-KW"/>
</dbReference>
<dbReference type="GO" id="GO:0004984">
    <property type="term" value="F:olfactory receptor activity"/>
    <property type="evidence" value="ECO:0000247"/>
    <property type="project" value="MGI"/>
</dbReference>
<dbReference type="GO" id="GO:0007186">
    <property type="term" value="P:G protein-coupled receptor signaling pathway"/>
    <property type="evidence" value="ECO:0000247"/>
    <property type="project" value="MGI"/>
</dbReference>
<dbReference type="GO" id="GO:0007608">
    <property type="term" value="P:sensory perception of smell"/>
    <property type="evidence" value="ECO:0000247"/>
    <property type="project" value="MGI"/>
</dbReference>
<dbReference type="CDD" id="cd15230">
    <property type="entry name" value="7tmA_OR5-like"/>
    <property type="match status" value="1"/>
</dbReference>
<dbReference type="FunFam" id="1.20.1070.10:FF:000003">
    <property type="entry name" value="Olfactory receptor"/>
    <property type="match status" value="1"/>
</dbReference>
<dbReference type="Gene3D" id="1.20.1070.10">
    <property type="entry name" value="Rhodopsin 7-helix transmembrane proteins"/>
    <property type="match status" value="1"/>
</dbReference>
<dbReference type="InterPro" id="IPR000276">
    <property type="entry name" value="GPCR_Rhodpsn"/>
</dbReference>
<dbReference type="InterPro" id="IPR017452">
    <property type="entry name" value="GPCR_Rhodpsn_7TM"/>
</dbReference>
<dbReference type="InterPro" id="IPR000725">
    <property type="entry name" value="Olfact_rcpt"/>
</dbReference>
<dbReference type="PANTHER" id="PTHR48018">
    <property type="entry name" value="OLFACTORY RECEPTOR"/>
    <property type="match status" value="1"/>
</dbReference>
<dbReference type="Pfam" id="PF13853">
    <property type="entry name" value="7tm_4"/>
    <property type="match status" value="1"/>
</dbReference>
<dbReference type="PRINTS" id="PR00237">
    <property type="entry name" value="GPCRRHODOPSN"/>
</dbReference>
<dbReference type="PRINTS" id="PR00245">
    <property type="entry name" value="OLFACTORYR"/>
</dbReference>
<dbReference type="SUPFAM" id="SSF81321">
    <property type="entry name" value="Family A G protein-coupled receptor-like"/>
    <property type="match status" value="1"/>
</dbReference>
<dbReference type="PROSITE" id="PS00237">
    <property type="entry name" value="G_PROTEIN_RECEP_F1_1"/>
    <property type="match status" value="1"/>
</dbReference>
<dbReference type="PROSITE" id="PS50262">
    <property type="entry name" value="G_PROTEIN_RECEP_F1_2"/>
    <property type="match status" value="1"/>
</dbReference>
<keyword id="KW-1003">Cell membrane</keyword>
<keyword id="KW-1015">Disulfide bond</keyword>
<keyword id="KW-0297">G-protein coupled receptor</keyword>
<keyword id="KW-0325">Glycoprotein</keyword>
<keyword id="KW-0472">Membrane</keyword>
<keyword id="KW-0552">Olfaction</keyword>
<keyword id="KW-0675">Receptor</keyword>
<keyword id="KW-1185">Reference proteome</keyword>
<keyword id="KW-0716">Sensory transduction</keyword>
<keyword id="KW-0807">Transducer</keyword>
<keyword id="KW-0812">Transmembrane</keyword>
<keyword id="KW-1133">Transmembrane helix</keyword>
<name>O5B21_MOUSE</name>